<evidence type="ECO:0000250" key="1"/>
<evidence type="ECO:0000269" key="2">
    <source>
    </source>
</evidence>
<evidence type="ECO:0000305" key="3"/>
<organism>
    <name type="scientific">Arabidopsis thaliana</name>
    <name type="common">Mouse-ear cress</name>
    <dbReference type="NCBI Taxonomy" id="3702"/>
    <lineage>
        <taxon>Eukaryota</taxon>
        <taxon>Viridiplantae</taxon>
        <taxon>Streptophyta</taxon>
        <taxon>Embryophyta</taxon>
        <taxon>Tracheophyta</taxon>
        <taxon>Spermatophyta</taxon>
        <taxon>Magnoliopsida</taxon>
        <taxon>eudicotyledons</taxon>
        <taxon>Gunneridae</taxon>
        <taxon>Pentapetalae</taxon>
        <taxon>rosids</taxon>
        <taxon>malvids</taxon>
        <taxon>Brassicales</taxon>
        <taxon>Brassicaceae</taxon>
        <taxon>Camelineae</taxon>
        <taxon>Arabidopsis</taxon>
    </lineage>
</organism>
<accession>Q9SHH8</accession>
<reference key="1">
    <citation type="journal article" date="2006" name="Plant Cell Rep.">
        <title>Characterization of two Arabidopsis thaliana glutathione S-transferases.</title>
        <authorList>
            <person name="Nutricati E."/>
            <person name="Miceli A."/>
            <person name="Blando F."/>
            <person name="De Bellis L."/>
        </authorList>
    </citation>
    <scope>NUCLEOTIDE SEQUENCE [MRNA]</scope>
    <scope>FUNCTION</scope>
    <scope>INDUCTION</scope>
</reference>
<reference key="2">
    <citation type="journal article" date="2000" name="Nature">
        <title>Sequence and analysis of chromosome 1 of the plant Arabidopsis thaliana.</title>
        <authorList>
            <person name="Theologis A."/>
            <person name="Ecker J.R."/>
            <person name="Palm C.J."/>
            <person name="Federspiel N.A."/>
            <person name="Kaul S."/>
            <person name="White O."/>
            <person name="Alonso J."/>
            <person name="Altafi H."/>
            <person name="Araujo R."/>
            <person name="Bowman C.L."/>
            <person name="Brooks S.Y."/>
            <person name="Buehler E."/>
            <person name="Chan A."/>
            <person name="Chao Q."/>
            <person name="Chen H."/>
            <person name="Cheuk R.F."/>
            <person name="Chin C.W."/>
            <person name="Chung M.K."/>
            <person name="Conn L."/>
            <person name="Conway A.B."/>
            <person name="Conway A.R."/>
            <person name="Creasy T.H."/>
            <person name="Dewar K."/>
            <person name="Dunn P."/>
            <person name="Etgu P."/>
            <person name="Feldblyum T.V."/>
            <person name="Feng J.-D."/>
            <person name="Fong B."/>
            <person name="Fujii C.Y."/>
            <person name="Gill J.E."/>
            <person name="Goldsmith A.D."/>
            <person name="Haas B."/>
            <person name="Hansen N.F."/>
            <person name="Hughes B."/>
            <person name="Huizar L."/>
            <person name="Hunter J.L."/>
            <person name="Jenkins J."/>
            <person name="Johnson-Hopson C."/>
            <person name="Khan S."/>
            <person name="Khaykin E."/>
            <person name="Kim C.J."/>
            <person name="Koo H.L."/>
            <person name="Kremenetskaia I."/>
            <person name="Kurtz D.B."/>
            <person name="Kwan A."/>
            <person name="Lam B."/>
            <person name="Langin-Hooper S."/>
            <person name="Lee A."/>
            <person name="Lee J.M."/>
            <person name="Lenz C.A."/>
            <person name="Li J.H."/>
            <person name="Li Y.-P."/>
            <person name="Lin X."/>
            <person name="Liu S.X."/>
            <person name="Liu Z.A."/>
            <person name="Luros J.S."/>
            <person name="Maiti R."/>
            <person name="Marziali A."/>
            <person name="Militscher J."/>
            <person name="Miranda M."/>
            <person name="Nguyen M."/>
            <person name="Nierman W.C."/>
            <person name="Osborne B.I."/>
            <person name="Pai G."/>
            <person name="Peterson J."/>
            <person name="Pham P.K."/>
            <person name="Rizzo M."/>
            <person name="Rooney T."/>
            <person name="Rowley D."/>
            <person name="Sakano H."/>
            <person name="Salzberg S.L."/>
            <person name="Schwartz J.R."/>
            <person name="Shinn P."/>
            <person name="Southwick A.M."/>
            <person name="Sun H."/>
            <person name="Tallon L.J."/>
            <person name="Tambunga G."/>
            <person name="Toriumi M.J."/>
            <person name="Town C.D."/>
            <person name="Utterback T."/>
            <person name="Van Aken S."/>
            <person name="Vaysberg M."/>
            <person name="Vysotskaia V.S."/>
            <person name="Walker M."/>
            <person name="Wu D."/>
            <person name="Yu G."/>
            <person name="Fraser C.M."/>
            <person name="Venter J.C."/>
            <person name="Davis R.W."/>
        </authorList>
    </citation>
    <scope>NUCLEOTIDE SEQUENCE [LARGE SCALE GENOMIC DNA]</scope>
    <source>
        <strain>cv. Columbia</strain>
    </source>
</reference>
<reference key="3">
    <citation type="journal article" date="2017" name="Plant J.">
        <title>Araport11: a complete reannotation of the Arabidopsis thaliana reference genome.</title>
        <authorList>
            <person name="Cheng C.Y."/>
            <person name="Krishnakumar V."/>
            <person name="Chan A.P."/>
            <person name="Thibaud-Nissen F."/>
            <person name="Schobel S."/>
            <person name="Town C.D."/>
        </authorList>
    </citation>
    <scope>GENOME REANNOTATION</scope>
    <source>
        <strain>cv. Columbia</strain>
    </source>
</reference>
<reference key="4">
    <citation type="journal article" date="2003" name="Science">
        <title>Empirical analysis of transcriptional activity in the Arabidopsis genome.</title>
        <authorList>
            <person name="Yamada K."/>
            <person name="Lim J."/>
            <person name="Dale J.M."/>
            <person name="Chen H."/>
            <person name="Shinn P."/>
            <person name="Palm C.J."/>
            <person name="Southwick A.M."/>
            <person name="Wu H.C."/>
            <person name="Kim C.J."/>
            <person name="Nguyen M."/>
            <person name="Pham P.K."/>
            <person name="Cheuk R.F."/>
            <person name="Karlin-Newmann G."/>
            <person name="Liu S.X."/>
            <person name="Lam B."/>
            <person name="Sakano H."/>
            <person name="Wu T."/>
            <person name="Yu G."/>
            <person name="Miranda M."/>
            <person name="Quach H.L."/>
            <person name="Tripp M."/>
            <person name="Chang C.H."/>
            <person name="Lee J.M."/>
            <person name="Toriumi M.J."/>
            <person name="Chan M.M."/>
            <person name="Tang C.C."/>
            <person name="Onodera C.S."/>
            <person name="Deng J.M."/>
            <person name="Akiyama K."/>
            <person name="Ansari Y."/>
            <person name="Arakawa T."/>
            <person name="Banh J."/>
            <person name="Banno F."/>
            <person name="Bowser L."/>
            <person name="Brooks S.Y."/>
            <person name="Carninci P."/>
            <person name="Chao Q."/>
            <person name="Choy N."/>
            <person name="Enju A."/>
            <person name="Goldsmith A.D."/>
            <person name="Gurjal M."/>
            <person name="Hansen N.F."/>
            <person name="Hayashizaki Y."/>
            <person name="Johnson-Hopson C."/>
            <person name="Hsuan V.W."/>
            <person name="Iida K."/>
            <person name="Karnes M."/>
            <person name="Khan S."/>
            <person name="Koesema E."/>
            <person name="Ishida J."/>
            <person name="Jiang P.X."/>
            <person name="Jones T."/>
            <person name="Kawai J."/>
            <person name="Kamiya A."/>
            <person name="Meyers C."/>
            <person name="Nakajima M."/>
            <person name="Narusaka M."/>
            <person name="Seki M."/>
            <person name="Sakurai T."/>
            <person name="Satou M."/>
            <person name="Tamse R."/>
            <person name="Vaysberg M."/>
            <person name="Wallender E.K."/>
            <person name="Wong C."/>
            <person name="Yamamura Y."/>
            <person name="Yuan S."/>
            <person name="Shinozaki K."/>
            <person name="Davis R.W."/>
            <person name="Theologis A."/>
            <person name="Ecker J.R."/>
        </authorList>
    </citation>
    <scope>NUCLEOTIDE SEQUENCE [LARGE SCALE MRNA]</scope>
    <source>
        <strain>cv. Columbia</strain>
    </source>
</reference>
<reference key="5">
    <citation type="submission" date="2006-07" db="EMBL/GenBank/DDBJ databases">
        <title>Large-scale analysis of RIKEN Arabidopsis full-length (RAFL) cDNAs.</title>
        <authorList>
            <person name="Totoki Y."/>
            <person name="Seki M."/>
            <person name="Ishida J."/>
            <person name="Nakajima M."/>
            <person name="Enju A."/>
            <person name="Kamiya A."/>
            <person name="Narusaka M."/>
            <person name="Shin-i T."/>
            <person name="Nakagawa M."/>
            <person name="Sakamoto N."/>
            <person name="Oishi K."/>
            <person name="Kohara Y."/>
            <person name="Kobayashi M."/>
            <person name="Toyoda A."/>
            <person name="Sakaki Y."/>
            <person name="Sakurai T."/>
            <person name="Iida K."/>
            <person name="Akiyama K."/>
            <person name="Satou M."/>
            <person name="Toyoda T."/>
            <person name="Konagaya A."/>
            <person name="Carninci P."/>
            <person name="Kawai J."/>
            <person name="Hayashizaki Y."/>
            <person name="Shinozaki K."/>
        </authorList>
    </citation>
    <scope>NUCLEOTIDE SEQUENCE [LARGE SCALE MRNA]</scope>
    <source>
        <strain>cv. Columbia</strain>
    </source>
</reference>
<reference key="6">
    <citation type="journal article" date="2002" name="Plant Mol. Biol.">
        <title>Probing the diversity of the Arabidopsis glutathione S-transferase gene family.</title>
        <authorList>
            <person name="Wagner U."/>
            <person name="Edwards R."/>
            <person name="Dixon D.P."/>
            <person name="Mauch F."/>
        </authorList>
    </citation>
    <scope>GENE FAMILY</scope>
    <scope>NOMENCLATURE</scope>
</reference>
<sequence>MANDQVILLDYWPSMFGMRTKMALAEKGVKYEYKETDPWVKTPLLIEMNPIHKKIPVLIHNGKPICESLIQLEYIDEVWSDASPILPSDPYQKSRARFWAEFIDKKFYDPSWKVWATMGEEHAAVKKELLEHFKTLETELGDKPYYGGEVFGYLDIALMGYYSWFKAMEKFGEFSIETEFPILTTWTKRCLERESVVKALADSDRIIEYVYVLRKKFGAA</sequence>
<dbReference type="EC" id="2.5.1.18"/>
<dbReference type="EMBL" id="AJ306688">
    <property type="protein sequence ID" value="CAC36895.1"/>
    <property type="molecule type" value="mRNA"/>
</dbReference>
<dbReference type="EMBL" id="AC007651">
    <property type="protein sequence ID" value="AAD50014.1"/>
    <property type="molecule type" value="Genomic_DNA"/>
</dbReference>
<dbReference type="EMBL" id="CP002684">
    <property type="protein sequence ID" value="AEE29556.1"/>
    <property type="molecule type" value="Genomic_DNA"/>
</dbReference>
<dbReference type="EMBL" id="BT004605">
    <property type="protein sequence ID" value="AAO42851.1"/>
    <property type="molecule type" value="mRNA"/>
</dbReference>
<dbReference type="EMBL" id="AK227997">
    <property type="protein sequence ID" value="BAE99962.1"/>
    <property type="molecule type" value="mRNA"/>
</dbReference>
<dbReference type="PIR" id="A86308">
    <property type="entry name" value="A86308"/>
</dbReference>
<dbReference type="RefSeq" id="NP_173162.1">
    <property type="nucleotide sequence ID" value="NM_101580.4"/>
</dbReference>
<dbReference type="SMR" id="Q9SHH8"/>
<dbReference type="BioGRID" id="23530">
    <property type="interactions" value="4"/>
</dbReference>
<dbReference type="FunCoup" id="Q9SHH8">
    <property type="interactions" value="174"/>
</dbReference>
<dbReference type="IntAct" id="Q9SHH8">
    <property type="interactions" value="4"/>
</dbReference>
<dbReference type="STRING" id="3702.Q9SHH8"/>
<dbReference type="PaxDb" id="3702-AT1G17190.1"/>
<dbReference type="ProteomicsDB" id="247202"/>
<dbReference type="EnsemblPlants" id="AT1G17190.1">
    <property type="protein sequence ID" value="AT1G17190.1"/>
    <property type="gene ID" value="AT1G17190"/>
</dbReference>
<dbReference type="GeneID" id="838290"/>
<dbReference type="Gramene" id="AT1G17190.1">
    <property type="protein sequence ID" value="AT1G17190.1"/>
    <property type="gene ID" value="AT1G17190"/>
</dbReference>
<dbReference type="KEGG" id="ath:AT1G17190"/>
<dbReference type="Araport" id="AT1G17190"/>
<dbReference type="TAIR" id="AT1G17190">
    <property type="gene designation" value="GSTU26"/>
</dbReference>
<dbReference type="eggNOG" id="KOG0406">
    <property type="taxonomic scope" value="Eukaryota"/>
</dbReference>
<dbReference type="HOGENOM" id="CLU_011226_18_2_1"/>
<dbReference type="InParanoid" id="Q9SHH8"/>
<dbReference type="OMA" id="KYEYKET"/>
<dbReference type="PhylomeDB" id="Q9SHH8"/>
<dbReference type="BRENDA" id="2.5.1.18">
    <property type="organism ID" value="399"/>
</dbReference>
<dbReference type="PRO" id="PR:Q9SHH8"/>
<dbReference type="Proteomes" id="UP000006548">
    <property type="component" value="Chromosome 1"/>
</dbReference>
<dbReference type="ExpressionAtlas" id="Q9SHH8">
    <property type="expression patterns" value="baseline and differential"/>
</dbReference>
<dbReference type="GO" id="GO:0005737">
    <property type="term" value="C:cytoplasm"/>
    <property type="evidence" value="ECO:0000303"/>
    <property type="project" value="TAIR"/>
</dbReference>
<dbReference type="GO" id="GO:0005829">
    <property type="term" value="C:cytosol"/>
    <property type="evidence" value="ECO:0007669"/>
    <property type="project" value="UniProtKB-SubCell"/>
</dbReference>
<dbReference type="GO" id="GO:0004364">
    <property type="term" value="F:glutathione transferase activity"/>
    <property type="evidence" value="ECO:0000314"/>
    <property type="project" value="TAIR"/>
</dbReference>
<dbReference type="GO" id="GO:0006749">
    <property type="term" value="P:glutathione metabolic process"/>
    <property type="evidence" value="ECO:0007669"/>
    <property type="project" value="InterPro"/>
</dbReference>
<dbReference type="GO" id="GO:0009409">
    <property type="term" value="P:response to cold"/>
    <property type="evidence" value="ECO:0000270"/>
    <property type="project" value="TAIR"/>
</dbReference>
<dbReference type="GO" id="GO:0009635">
    <property type="term" value="P:response to herbicide"/>
    <property type="evidence" value="ECO:0000270"/>
    <property type="project" value="TAIR"/>
</dbReference>
<dbReference type="GO" id="GO:0009407">
    <property type="term" value="P:toxin catabolic process"/>
    <property type="evidence" value="ECO:0000304"/>
    <property type="project" value="TAIR"/>
</dbReference>
<dbReference type="CDD" id="cd03185">
    <property type="entry name" value="GST_C_Tau"/>
    <property type="match status" value="1"/>
</dbReference>
<dbReference type="CDD" id="cd03058">
    <property type="entry name" value="GST_N_Tau"/>
    <property type="match status" value="1"/>
</dbReference>
<dbReference type="FunFam" id="1.20.1050.10:FF:000018">
    <property type="entry name" value="Glutathione S-transferase U20"/>
    <property type="match status" value="1"/>
</dbReference>
<dbReference type="FunFam" id="3.40.30.10:FF:000014">
    <property type="entry name" value="Tau class glutathione S-transferase"/>
    <property type="match status" value="1"/>
</dbReference>
<dbReference type="Gene3D" id="1.20.1050.10">
    <property type="match status" value="1"/>
</dbReference>
<dbReference type="Gene3D" id="3.40.30.10">
    <property type="entry name" value="Glutaredoxin"/>
    <property type="match status" value="1"/>
</dbReference>
<dbReference type="InterPro" id="IPR010987">
    <property type="entry name" value="Glutathione-S-Trfase_C-like"/>
</dbReference>
<dbReference type="InterPro" id="IPR036282">
    <property type="entry name" value="Glutathione-S-Trfase_C_sf"/>
</dbReference>
<dbReference type="InterPro" id="IPR004045">
    <property type="entry name" value="Glutathione_S-Trfase_N"/>
</dbReference>
<dbReference type="InterPro" id="IPR045074">
    <property type="entry name" value="GST_C_Tau"/>
</dbReference>
<dbReference type="InterPro" id="IPR045073">
    <property type="entry name" value="Omega/Tau-like"/>
</dbReference>
<dbReference type="InterPro" id="IPR036249">
    <property type="entry name" value="Thioredoxin-like_sf"/>
</dbReference>
<dbReference type="PANTHER" id="PTHR11260:SF773">
    <property type="entry name" value="GLUTATHIONE S-TRANSFERASE U26"/>
    <property type="match status" value="1"/>
</dbReference>
<dbReference type="PANTHER" id="PTHR11260">
    <property type="entry name" value="GLUTATHIONE S-TRANSFERASE, GST, SUPERFAMILY, GST DOMAIN CONTAINING"/>
    <property type="match status" value="1"/>
</dbReference>
<dbReference type="Pfam" id="PF13410">
    <property type="entry name" value="GST_C_2"/>
    <property type="match status" value="1"/>
</dbReference>
<dbReference type="Pfam" id="PF02798">
    <property type="entry name" value="GST_N"/>
    <property type="match status" value="1"/>
</dbReference>
<dbReference type="SFLD" id="SFLDG01152">
    <property type="entry name" value="Main.3:_Omega-_and_Tau-like"/>
    <property type="match status" value="1"/>
</dbReference>
<dbReference type="SFLD" id="SFLDG00358">
    <property type="entry name" value="Main_(cytGST)"/>
    <property type="match status" value="1"/>
</dbReference>
<dbReference type="SUPFAM" id="SSF47616">
    <property type="entry name" value="GST C-terminal domain-like"/>
    <property type="match status" value="1"/>
</dbReference>
<dbReference type="SUPFAM" id="SSF52833">
    <property type="entry name" value="Thioredoxin-like"/>
    <property type="match status" value="1"/>
</dbReference>
<dbReference type="PROSITE" id="PS50405">
    <property type="entry name" value="GST_CTER"/>
    <property type="match status" value="1"/>
</dbReference>
<dbReference type="PROSITE" id="PS50404">
    <property type="entry name" value="GST_NTER"/>
    <property type="match status" value="1"/>
</dbReference>
<keyword id="KW-0963">Cytoplasm</keyword>
<keyword id="KW-0216">Detoxification</keyword>
<keyword id="KW-1185">Reference proteome</keyword>
<keyword id="KW-0346">Stress response</keyword>
<keyword id="KW-0808">Transferase</keyword>
<feature type="chain" id="PRO_0000413571" description="Glutathione S-transferase U26">
    <location>
        <begin position="1"/>
        <end position="220"/>
    </location>
</feature>
<feature type="domain" description="GST N-terminal">
    <location>
        <begin position="4"/>
        <end position="83"/>
    </location>
</feature>
<feature type="domain" description="GST C-terminal">
    <location>
        <begin position="89"/>
        <end position="210"/>
    </location>
</feature>
<feature type="binding site" evidence="1">
    <location>
        <begin position="14"/>
        <end position="15"/>
    </location>
    <ligand>
        <name>glutathione</name>
        <dbReference type="ChEBI" id="CHEBI:57925"/>
    </ligand>
</feature>
<feature type="binding site" evidence="1">
    <location>
        <begin position="40"/>
        <end position="41"/>
    </location>
    <ligand>
        <name>glutathione</name>
        <dbReference type="ChEBI" id="CHEBI:57925"/>
    </ligand>
</feature>
<feature type="binding site" evidence="1">
    <location>
        <begin position="54"/>
        <end position="55"/>
    </location>
    <ligand>
        <name>glutathione</name>
        <dbReference type="ChEBI" id="CHEBI:57925"/>
    </ligand>
</feature>
<feature type="binding site" evidence="1">
    <location>
        <begin position="67"/>
        <end position="68"/>
    </location>
    <ligand>
        <name>glutathione</name>
        <dbReference type="ChEBI" id="CHEBI:57925"/>
    </ligand>
</feature>
<name>GSTUQ_ARATH</name>
<proteinExistence type="evidence at transcript level"/>
<gene>
    <name type="primary">GSTU26</name>
    <name type="ordered locus">At1g17190</name>
    <name type="ORF">F20D23.11</name>
</gene>
<protein>
    <recommendedName>
        <fullName>Glutathione S-transferase U26</fullName>
        <shortName>AtGSTU26</shortName>
        <ecNumber>2.5.1.18</ecNumber>
    </recommendedName>
    <alternativeName>
        <fullName>GST class-tau member 26</fullName>
    </alternativeName>
</protein>
<comment type="function">
    <text evidence="2">In vitro, possesses glutathione S-transferase activity toward 1-chloro-2,4-dinitrobenzene (CDNB). May be involved in the conjugation of reduced glutathione to a wide number of exogenous and endogenous hydrophobic electrophiles and have a detoxification role against certain herbicides.</text>
</comment>
<comment type="catalytic activity">
    <reaction>
        <text>RX + glutathione = an S-substituted glutathione + a halide anion + H(+)</text>
        <dbReference type="Rhea" id="RHEA:16437"/>
        <dbReference type="ChEBI" id="CHEBI:15378"/>
        <dbReference type="ChEBI" id="CHEBI:16042"/>
        <dbReference type="ChEBI" id="CHEBI:17792"/>
        <dbReference type="ChEBI" id="CHEBI:57925"/>
        <dbReference type="ChEBI" id="CHEBI:90779"/>
        <dbReference type="EC" id="2.5.1.18"/>
    </reaction>
</comment>
<comment type="subcellular location">
    <subcellularLocation>
        <location evidence="3">Cytoplasm</location>
        <location evidence="3">Cytosol</location>
    </subcellularLocation>
</comment>
<comment type="induction">
    <text evidence="2">By alachlor, metolachlor and benoxacor.</text>
</comment>
<comment type="similarity">
    <text evidence="3">Belongs to the GST superfamily. Tau family.</text>
</comment>